<dbReference type="EMBL" id="CP000246">
    <property type="protein sequence ID" value="ABG82498.1"/>
    <property type="molecule type" value="Genomic_DNA"/>
</dbReference>
<dbReference type="RefSeq" id="WP_003454434.1">
    <property type="nucleotide sequence ID" value="NC_008261.1"/>
</dbReference>
<dbReference type="SMR" id="Q0TMT2"/>
<dbReference type="STRING" id="195103.CPF_2678"/>
<dbReference type="PaxDb" id="195103-CPF_2678"/>
<dbReference type="GeneID" id="93001045"/>
<dbReference type="KEGG" id="cpf:CPF_2678"/>
<dbReference type="eggNOG" id="COG0103">
    <property type="taxonomic scope" value="Bacteria"/>
</dbReference>
<dbReference type="HOGENOM" id="CLU_046483_2_1_9"/>
<dbReference type="Proteomes" id="UP000001823">
    <property type="component" value="Chromosome"/>
</dbReference>
<dbReference type="GO" id="GO:0022627">
    <property type="term" value="C:cytosolic small ribosomal subunit"/>
    <property type="evidence" value="ECO:0007669"/>
    <property type="project" value="TreeGrafter"/>
</dbReference>
<dbReference type="GO" id="GO:0003723">
    <property type="term" value="F:RNA binding"/>
    <property type="evidence" value="ECO:0007669"/>
    <property type="project" value="TreeGrafter"/>
</dbReference>
<dbReference type="GO" id="GO:0003735">
    <property type="term" value="F:structural constituent of ribosome"/>
    <property type="evidence" value="ECO:0007669"/>
    <property type="project" value="InterPro"/>
</dbReference>
<dbReference type="GO" id="GO:0006412">
    <property type="term" value="P:translation"/>
    <property type="evidence" value="ECO:0007669"/>
    <property type="project" value="UniProtKB-UniRule"/>
</dbReference>
<dbReference type="FunFam" id="3.30.230.10:FF:000001">
    <property type="entry name" value="30S ribosomal protein S9"/>
    <property type="match status" value="1"/>
</dbReference>
<dbReference type="Gene3D" id="3.30.230.10">
    <property type="match status" value="1"/>
</dbReference>
<dbReference type="HAMAP" id="MF_00532_B">
    <property type="entry name" value="Ribosomal_uS9_B"/>
    <property type="match status" value="1"/>
</dbReference>
<dbReference type="InterPro" id="IPR020568">
    <property type="entry name" value="Ribosomal_Su5_D2-typ_SF"/>
</dbReference>
<dbReference type="InterPro" id="IPR000754">
    <property type="entry name" value="Ribosomal_uS9"/>
</dbReference>
<dbReference type="InterPro" id="IPR023035">
    <property type="entry name" value="Ribosomal_uS9_bac/plastid"/>
</dbReference>
<dbReference type="InterPro" id="IPR020574">
    <property type="entry name" value="Ribosomal_uS9_CS"/>
</dbReference>
<dbReference type="InterPro" id="IPR014721">
    <property type="entry name" value="Ribsml_uS5_D2-typ_fold_subgr"/>
</dbReference>
<dbReference type="NCBIfam" id="NF001099">
    <property type="entry name" value="PRK00132.1"/>
    <property type="match status" value="1"/>
</dbReference>
<dbReference type="PANTHER" id="PTHR21569">
    <property type="entry name" value="RIBOSOMAL PROTEIN S9"/>
    <property type="match status" value="1"/>
</dbReference>
<dbReference type="PANTHER" id="PTHR21569:SF1">
    <property type="entry name" value="SMALL RIBOSOMAL SUBUNIT PROTEIN US9M"/>
    <property type="match status" value="1"/>
</dbReference>
<dbReference type="Pfam" id="PF00380">
    <property type="entry name" value="Ribosomal_S9"/>
    <property type="match status" value="1"/>
</dbReference>
<dbReference type="SUPFAM" id="SSF54211">
    <property type="entry name" value="Ribosomal protein S5 domain 2-like"/>
    <property type="match status" value="1"/>
</dbReference>
<dbReference type="PROSITE" id="PS00360">
    <property type="entry name" value="RIBOSOMAL_S9"/>
    <property type="match status" value="1"/>
</dbReference>
<protein>
    <recommendedName>
        <fullName evidence="1">Small ribosomal subunit protein uS9</fullName>
    </recommendedName>
    <alternativeName>
        <fullName evidence="2">30S ribosomal protein S9</fullName>
    </alternativeName>
</protein>
<comment type="similarity">
    <text evidence="1">Belongs to the universal ribosomal protein uS9 family.</text>
</comment>
<sequence length="130" mass="14611">MAKVQYMGTGRRKKSVARVRLVPGEGRVIVNNREIETYFGLETLRVVVNQPLVLTETKDKYDVLVNVHGGGLSGQAGAIRHGISRALLKADENLRPELKKAGFLTRDPRMVERKKCGLKKARRSPQFSKR</sequence>
<proteinExistence type="inferred from homology"/>
<reference key="1">
    <citation type="journal article" date="2006" name="Genome Res.">
        <title>Skewed genomic variability in strains of the toxigenic bacterial pathogen, Clostridium perfringens.</title>
        <authorList>
            <person name="Myers G.S.A."/>
            <person name="Rasko D.A."/>
            <person name="Cheung J.K."/>
            <person name="Ravel J."/>
            <person name="Seshadri R."/>
            <person name="DeBoy R.T."/>
            <person name="Ren Q."/>
            <person name="Varga J."/>
            <person name="Awad M.M."/>
            <person name="Brinkac L.M."/>
            <person name="Daugherty S.C."/>
            <person name="Haft D.H."/>
            <person name="Dodson R.J."/>
            <person name="Madupu R."/>
            <person name="Nelson W.C."/>
            <person name="Rosovitz M.J."/>
            <person name="Sullivan S.A."/>
            <person name="Khouri H."/>
            <person name="Dimitrov G.I."/>
            <person name="Watkins K.L."/>
            <person name="Mulligan S."/>
            <person name="Benton J."/>
            <person name="Radune D."/>
            <person name="Fisher D.J."/>
            <person name="Atkins H.S."/>
            <person name="Hiscox T."/>
            <person name="Jost B.H."/>
            <person name="Billington S.J."/>
            <person name="Songer J.G."/>
            <person name="McClane B.A."/>
            <person name="Titball R.W."/>
            <person name="Rood J.I."/>
            <person name="Melville S.B."/>
            <person name="Paulsen I.T."/>
        </authorList>
    </citation>
    <scope>NUCLEOTIDE SEQUENCE [LARGE SCALE GENOMIC DNA]</scope>
    <source>
        <strain>ATCC 13124 / DSM 756 / JCM 1290 / NCIMB 6125 / NCTC 8237 / S 107 / Type A</strain>
    </source>
</reference>
<accession>Q0TMT2</accession>
<gene>
    <name evidence="1" type="primary">rpsI</name>
    <name type="ordered locus">CPF_2678</name>
</gene>
<organism>
    <name type="scientific">Clostridium perfringens (strain ATCC 13124 / DSM 756 / JCM 1290 / NCIMB 6125 / NCTC 8237 / Type A)</name>
    <dbReference type="NCBI Taxonomy" id="195103"/>
    <lineage>
        <taxon>Bacteria</taxon>
        <taxon>Bacillati</taxon>
        <taxon>Bacillota</taxon>
        <taxon>Clostridia</taxon>
        <taxon>Eubacteriales</taxon>
        <taxon>Clostridiaceae</taxon>
        <taxon>Clostridium</taxon>
    </lineage>
</organism>
<evidence type="ECO:0000255" key="1">
    <source>
        <dbReference type="HAMAP-Rule" id="MF_00532"/>
    </source>
</evidence>
<evidence type="ECO:0000305" key="2"/>
<name>RS9_CLOP1</name>
<keyword id="KW-0687">Ribonucleoprotein</keyword>
<keyword id="KW-0689">Ribosomal protein</keyword>
<feature type="chain" id="PRO_1000051209" description="Small ribosomal subunit protein uS9">
    <location>
        <begin position="1"/>
        <end position="130"/>
    </location>
</feature>